<name>EXO70_ASPFU</name>
<keyword id="KW-0268">Exocytosis</keyword>
<keyword id="KW-0653">Protein transport</keyword>
<keyword id="KW-1185">Reference proteome</keyword>
<keyword id="KW-0813">Transport</keyword>
<evidence type="ECO:0000250" key="1"/>
<evidence type="ECO:0000305" key="2"/>
<feature type="chain" id="PRO_0000118965" description="Exocyst complex protein exo70">
    <location>
        <begin position="1"/>
        <end position="628"/>
    </location>
</feature>
<proteinExistence type="inferred from homology"/>
<dbReference type="EMBL" id="AAHF01000001">
    <property type="protein sequence ID" value="EAL93489.1"/>
    <property type="molecule type" value="Genomic_DNA"/>
</dbReference>
<dbReference type="RefSeq" id="XP_755527.1">
    <property type="nucleotide sequence ID" value="XM_750434.1"/>
</dbReference>
<dbReference type="SMR" id="Q4X0X6"/>
<dbReference type="FunCoup" id="Q4X0X6">
    <property type="interactions" value="120"/>
</dbReference>
<dbReference type="STRING" id="330879.Q4X0X6"/>
<dbReference type="EnsemblFungi" id="EAL93489">
    <property type="protein sequence ID" value="EAL93489"/>
    <property type="gene ID" value="AFUA_2G11960"/>
</dbReference>
<dbReference type="GeneID" id="3513574"/>
<dbReference type="KEGG" id="afm:AFUA_2G11960"/>
<dbReference type="VEuPathDB" id="FungiDB:Afu2g11960"/>
<dbReference type="eggNOG" id="KOG2344">
    <property type="taxonomic scope" value="Eukaryota"/>
</dbReference>
<dbReference type="HOGENOM" id="CLU_010236_4_2_1"/>
<dbReference type="InParanoid" id="Q4X0X6"/>
<dbReference type="OMA" id="GIIRAGP"/>
<dbReference type="OrthoDB" id="1922221at2759"/>
<dbReference type="Proteomes" id="UP000002530">
    <property type="component" value="Chromosome 2"/>
</dbReference>
<dbReference type="GO" id="GO:0005935">
    <property type="term" value="C:cellular bud neck"/>
    <property type="evidence" value="ECO:0007669"/>
    <property type="project" value="UniProtKB-SubCell"/>
</dbReference>
<dbReference type="GO" id="GO:0000145">
    <property type="term" value="C:exocyst"/>
    <property type="evidence" value="ECO:0000318"/>
    <property type="project" value="GO_Central"/>
</dbReference>
<dbReference type="GO" id="GO:0005546">
    <property type="term" value="F:phosphatidylinositol-4,5-bisphosphate binding"/>
    <property type="evidence" value="ECO:0007669"/>
    <property type="project" value="InterPro"/>
</dbReference>
<dbReference type="GO" id="GO:0006887">
    <property type="term" value="P:exocytosis"/>
    <property type="evidence" value="ECO:0000318"/>
    <property type="project" value="GO_Central"/>
</dbReference>
<dbReference type="GO" id="GO:0015031">
    <property type="term" value="P:protein transport"/>
    <property type="evidence" value="ECO:0007669"/>
    <property type="project" value="UniProtKB-KW"/>
</dbReference>
<dbReference type="Gene3D" id="1.20.1280.170">
    <property type="entry name" value="Exocyst complex component Exo70"/>
    <property type="match status" value="1"/>
</dbReference>
<dbReference type="InterPro" id="IPR016159">
    <property type="entry name" value="Cullin_repeat-like_dom_sf"/>
</dbReference>
<dbReference type="InterPro" id="IPR004140">
    <property type="entry name" value="Exo70"/>
</dbReference>
<dbReference type="InterPro" id="IPR046364">
    <property type="entry name" value="Exo70_C"/>
</dbReference>
<dbReference type="PANTHER" id="PTHR12542:SF41">
    <property type="entry name" value="EXOCYST COMPLEX COMPONENT 7"/>
    <property type="match status" value="1"/>
</dbReference>
<dbReference type="PANTHER" id="PTHR12542">
    <property type="entry name" value="EXOCYST COMPLEX PROTEIN EXO70"/>
    <property type="match status" value="1"/>
</dbReference>
<dbReference type="Pfam" id="PF03081">
    <property type="entry name" value="Exo70_C"/>
    <property type="match status" value="1"/>
</dbReference>
<dbReference type="Pfam" id="PF20669">
    <property type="entry name" value="Exo70_N"/>
    <property type="match status" value="1"/>
</dbReference>
<dbReference type="SUPFAM" id="SSF74788">
    <property type="entry name" value="Cullin repeat-like"/>
    <property type="match status" value="1"/>
</dbReference>
<sequence length="628" mass="68846">MVAPRHNAYAEESAEVEVLYANLEKLKLLTKKIQGSLVRLETGGNVVKHAIGPIYSNTQSLQITNSNIDKVNEAIERLRQPLDAKNREEGIIRAGPQSVELSQYLAAMKRVDKALVDLSSTNLKSNQKAISEFNNLLSTGNAKLQDMLRGILNQYASPIEPLHYLTKDLPFPSIPQETISELTSICAAIDSAASHGPQRGDGGNPALKIYADVRGAYLTSSLQNLAIASLNTVKRRAADGPYKQGTNGIGIYSNALENFISTEYEIIAQIFTGDQRGLALQTTFRSALAEYSKTLRELNEYIKANLMTDCFLAFEIIEIVTAMSYRVDSRTGELKSLFIEALRPVRETAKSSLSELLEETKRKAASIPVLPPDGGSVPLVNEVMSSLTTLTGYSGPLASILTSLGDGNWRSTANASGTAPLDVSPDSSALLSHFILDMIEALMSSLEARGRALHRSKAVQGVFLSNVFCIVDRAIRQSPELARHLGTPDSIARIDTFRKRATSTYLDAWKETSQYLLDVQYTSRAGARPASGGIVDSSAIVKSLSSKDKDAIKDKFKAFNASFDELVNRHKALYMEREVRGVLAREVQAVLEPLYARFWDRYHEIDKGRGKYVKYDKGSLSAQLAALA</sequence>
<reference key="1">
    <citation type="journal article" date="2005" name="Nature">
        <title>Genomic sequence of the pathogenic and allergenic filamentous fungus Aspergillus fumigatus.</title>
        <authorList>
            <person name="Nierman W.C."/>
            <person name="Pain A."/>
            <person name="Anderson M.J."/>
            <person name="Wortman J.R."/>
            <person name="Kim H.S."/>
            <person name="Arroyo J."/>
            <person name="Berriman M."/>
            <person name="Abe K."/>
            <person name="Archer D.B."/>
            <person name="Bermejo C."/>
            <person name="Bennett J.W."/>
            <person name="Bowyer P."/>
            <person name="Chen D."/>
            <person name="Collins M."/>
            <person name="Coulsen R."/>
            <person name="Davies R."/>
            <person name="Dyer P.S."/>
            <person name="Farman M.L."/>
            <person name="Fedorova N."/>
            <person name="Fedorova N.D."/>
            <person name="Feldblyum T.V."/>
            <person name="Fischer R."/>
            <person name="Fosker N."/>
            <person name="Fraser A."/>
            <person name="Garcia J.L."/>
            <person name="Garcia M.J."/>
            <person name="Goble A."/>
            <person name="Goldman G.H."/>
            <person name="Gomi K."/>
            <person name="Griffith-Jones S."/>
            <person name="Gwilliam R."/>
            <person name="Haas B.J."/>
            <person name="Haas H."/>
            <person name="Harris D.E."/>
            <person name="Horiuchi H."/>
            <person name="Huang J."/>
            <person name="Humphray S."/>
            <person name="Jimenez J."/>
            <person name="Keller N."/>
            <person name="Khouri H."/>
            <person name="Kitamoto K."/>
            <person name="Kobayashi T."/>
            <person name="Konzack S."/>
            <person name="Kulkarni R."/>
            <person name="Kumagai T."/>
            <person name="Lafton A."/>
            <person name="Latge J.-P."/>
            <person name="Li W."/>
            <person name="Lord A."/>
            <person name="Lu C."/>
            <person name="Majoros W.H."/>
            <person name="May G.S."/>
            <person name="Miller B.L."/>
            <person name="Mohamoud Y."/>
            <person name="Molina M."/>
            <person name="Monod M."/>
            <person name="Mouyna I."/>
            <person name="Mulligan S."/>
            <person name="Murphy L.D."/>
            <person name="O'Neil S."/>
            <person name="Paulsen I."/>
            <person name="Penalva M.A."/>
            <person name="Pertea M."/>
            <person name="Price C."/>
            <person name="Pritchard B.L."/>
            <person name="Quail M.A."/>
            <person name="Rabbinowitsch E."/>
            <person name="Rawlins N."/>
            <person name="Rajandream M.A."/>
            <person name="Reichard U."/>
            <person name="Renauld H."/>
            <person name="Robson G.D."/>
            <person name="Rodriguez de Cordoba S."/>
            <person name="Rodriguez-Pena J.M."/>
            <person name="Ronning C.M."/>
            <person name="Rutter S."/>
            <person name="Salzberg S.L."/>
            <person name="Sanchez M."/>
            <person name="Sanchez-Ferrero J.C."/>
            <person name="Saunders D."/>
            <person name="Seeger K."/>
            <person name="Squares R."/>
            <person name="Squares S."/>
            <person name="Takeuchi M."/>
            <person name="Tekaia F."/>
            <person name="Turner G."/>
            <person name="Vazquez de Aldana C.R."/>
            <person name="Weidman J."/>
            <person name="White O."/>
            <person name="Woodward J.R."/>
            <person name="Yu J.-H."/>
            <person name="Fraser C.M."/>
            <person name="Galagan J.E."/>
            <person name="Asai K."/>
            <person name="Machida M."/>
            <person name="Hall N."/>
            <person name="Barrell B.G."/>
            <person name="Denning D.W."/>
        </authorList>
    </citation>
    <scope>NUCLEOTIDE SEQUENCE [LARGE SCALE GENOMIC DNA]</scope>
    <source>
        <strain>ATCC MYA-4609 / CBS 101355 / FGSC A1100 / Af293</strain>
    </source>
</reference>
<organism>
    <name type="scientific">Aspergillus fumigatus (strain ATCC MYA-4609 / CBS 101355 / FGSC A1100 / Af293)</name>
    <name type="common">Neosartorya fumigata</name>
    <dbReference type="NCBI Taxonomy" id="330879"/>
    <lineage>
        <taxon>Eukaryota</taxon>
        <taxon>Fungi</taxon>
        <taxon>Dikarya</taxon>
        <taxon>Ascomycota</taxon>
        <taxon>Pezizomycotina</taxon>
        <taxon>Eurotiomycetes</taxon>
        <taxon>Eurotiomycetidae</taxon>
        <taxon>Eurotiales</taxon>
        <taxon>Aspergillaceae</taxon>
        <taxon>Aspergillus</taxon>
        <taxon>Aspergillus subgen. Fumigati</taxon>
    </lineage>
</organism>
<protein>
    <recommendedName>
        <fullName>Exocyst complex protein exo70</fullName>
    </recommendedName>
</protein>
<gene>
    <name type="primary">exo70</name>
    <name type="ORF">AFUA_2G11960</name>
</gene>
<accession>Q4X0X6</accession>
<comment type="function">
    <text evidence="1">Involved in the secretory pathway as part of the exocyst complex which tethers secretory vesicles to the sites of exocytosis. Also plays a role in the assembly of the exocyst (By similarity).</text>
</comment>
<comment type="subcellular location">
    <subcellularLocation>
        <location evidence="1">Bud</location>
    </subcellularLocation>
    <subcellularLocation>
        <location evidence="1">Bud neck</location>
    </subcellularLocation>
</comment>
<comment type="similarity">
    <text evidence="2">Belongs to the EXO70 family.</text>
</comment>